<protein>
    <recommendedName>
        <fullName>Snake venom serine protease AHP-Ka</fullName>
        <shortName>SVSP</shortName>
        <ecNumber>3.4.21.-</ecNumber>
    </recommendedName>
</protein>
<evidence type="ECO:0000255" key="1">
    <source>
        <dbReference type="PROSITE-ProRule" id="PRU00274"/>
    </source>
</evidence>
<evidence type="ECO:0000269" key="2">
    <source>
    </source>
</evidence>
<feature type="chain" id="PRO_0000417006" description="Snake venom serine protease AHP-Ka">
    <location>
        <begin position="1"/>
        <end position="15" status="greater than"/>
    </location>
</feature>
<feature type="domain" description="Peptidase S1" evidence="1">
    <location>
        <begin position="1"/>
        <end position="15" status="greater than"/>
    </location>
</feature>
<feature type="disulfide bond" evidence="1">
    <location>
        <begin position="7"/>
        <end status="unknown"/>
    </location>
</feature>
<feature type="non-terminal residue">
    <location>
        <position position="15"/>
    </location>
</feature>
<organism>
    <name type="scientific">Gloydius halys</name>
    <name type="common">Chinese water mocassin</name>
    <name type="synonym">Agkistrodon halys</name>
    <dbReference type="NCBI Taxonomy" id="8714"/>
    <lineage>
        <taxon>Eukaryota</taxon>
        <taxon>Metazoa</taxon>
        <taxon>Chordata</taxon>
        <taxon>Craniata</taxon>
        <taxon>Vertebrata</taxon>
        <taxon>Euteleostomi</taxon>
        <taxon>Lepidosauria</taxon>
        <taxon>Squamata</taxon>
        <taxon>Bifurcata</taxon>
        <taxon>Unidentata</taxon>
        <taxon>Episquamata</taxon>
        <taxon>Toxicofera</taxon>
        <taxon>Serpentes</taxon>
        <taxon>Colubroidea</taxon>
        <taxon>Viperidae</taxon>
        <taxon>Crotalinae</taxon>
        <taxon>Gloydius</taxon>
    </lineage>
</organism>
<dbReference type="EC" id="3.4.21.-"/>
<dbReference type="GO" id="GO:0005576">
    <property type="term" value="C:extracellular region"/>
    <property type="evidence" value="ECO:0007669"/>
    <property type="project" value="UniProtKB-SubCell"/>
</dbReference>
<dbReference type="GO" id="GO:0008236">
    <property type="term" value="F:serine-type peptidase activity"/>
    <property type="evidence" value="ECO:0007669"/>
    <property type="project" value="UniProtKB-KW"/>
</dbReference>
<dbReference type="GO" id="GO:0090729">
    <property type="term" value="F:toxin activity"/>
    <property type="evidence" value="ECO:0007669"/>
    <property type="project" value="UniProtKB-KW"/>
</dbReference>
<dbReference type="GO" id="GO:0006508">
    <property type="term" value="P:proteolysis"/>
    <property type="evidence" value="ECO:0007669"/>
    <property type="project" value="UniProtKB-KW"/>
</dbReference>
<keyword id="KW-0903">Direct protein sequencing</keyword>
<keyword id="KW-1015">Disulfide bond</keyword>
<keyword id="KW-0325">Glycoprotein</keyword>
<keyword id="KW-0378">Hydrolase</keyword>
<keyword id="KW-0645">Protease</keyword>
<keyword id="KW-0964">Secreted</keyword>
<keyword id="KW-0720">Serine protease</keyword>
<keyword id="KW-0800">Toxin</keyword>
<proteinExistence type="evidence at protein level"/>
<name>VSPKA_GLOHA</name>
<sequence length="15" mass="1716">VIGGDECNINEHRFL</sequence>
<accession>P0DJG5</accession>
<comment type="function">
    <text evidence="2">Snake venom serine protease that hydrolyzes specific chromogenic substrate S-2302 suggesting that AHP-Ka is a plasma kallikrein. Has esterase activity on alpha-N-benzoyl-L-arginine ethyl ester hydrochloride (BAEE) and amidolytic activity.</text>
</comment>
<comment type="activity regulation">
    <text evidence="2">Inhibited by PMSF, Fe(3+), Fe(2+), Cu(2+), Cd(2+), Mn(2+), and Al(3+). Not inhibited by Ca(2+) and Mg(2+) and EDTA.</text>
</comment>
<comment type="biophysicochemical properties">
    <phDependence>
        <text evidence="2">Optimum pH is 7-8.</text>
    </phDependence>
    <temperatureDependence>
        <text evidence="2">Optimum temperature is 30-40 degrees Celsius.</text>
    </temperatureDependence>
</comment>
<comment type="subunit">
    <text evidence="2">Monomer.</text>
</comment>
<comment type="subcellular location">
    <subcellularLocation>
        <location>Secreted</location>
    </subcellularLocation>
</comment>
<comment type="tissue specificity">
    <text>Expressed by the venom gland.</text>
</comment>
<comment type="PTM">
    <text>N-glycosylated. Cleavage of N-glycans reduces the catalytic enzymatic efficiency.</text>
</comment>
<comment type="mass spectrometry" mass="26243.0" method="MALDI" evidence="2"/>
<comment type="similarity">
    <text evidence="1">Belongs to the peptidase S1 family. Snake venom subfamily.</text>
</comment>
<reference key="1">
    <citation type="journal article" date="2012" name="J. Sci. Food Agric.">
        <title>Isolation and characterisation of a kallikrein-like enzyme from Agkistrodon halys pallas snake venom.</title>
        <authorList>
            <person name="Zhang Y."/>
            <person name="Xu W."/>
            <person name="Ma B."/>
            <person name="Huang K."/>
            <person name="Song M."/>
            <person name="Zhang N."/>
            <person name="Zhang Y."/>
            <person name="Wang Y."/>
            <person name="Dai Y."/>
            <person name="Luo Y."/>
        </authorList>
    </citation>
    <scope>PROTEIN SEQUENCE</scope>
    <scope>FUNCTION</scope>
    <scope>SUBUNIT</scope>
    <scope>ACTIVITY REGULATION</scope>
    <scope>BIOPHYSICOCHEMICAL PROPERTIES</scope>
    <scope>MASS SPECTROMETRY</scope>
    <source>
        <tissue>Venom</tissue>
    </source>
</reference>